<gene>
    <name evidence="1" type="primary">pepT</name>
    <name type="ordered locus">SpyM3_0533</name>
</gene>
<keyword id="KW-0031">Aminopeptidase</keyword>
<keyword id="KW-0963">Cytoplasm</keyword>
<keyword id="KW-0378">Hydrolase</keyword>
<keyword id="KW-0479">Metal-binding</keyword>
<keyword id="KW-0482">Metalloprotease</keyword>
<keyword id="KW-0645">Protease</keyword>
<keyword id="KW-0862">Zinc</keyword>
<protein>
    <recommendedName>
        <fullName evidence="1">Peptidase T</fullName>
        <ecNumber evidence="1">3.4.11.4</ecNumber>
    </recommendedName>
    <alternativeName>
        <fullName evidence="1">Aminotripeptidase</fullName>
        <shortName evidence="1">Tripeptidase</shortName>
    </alternativeName>
    <alternativeName>
        <fullName evidence="1">Tripeptide aminopeptidase</fullName>
    </alternativeName>
</protein>
<name>PEPT_STRP3</name>
<dbReference type="EC" id="3.4.11.4" evidence="1"/>
<dbReference type="EMBL" id="AE014074">
    <property type="protein sequence ID" value="AAM79140.1"/>
    <property type="molecule type" value="Genomic_DNA"/>
</dbReference>
<dbReference type="RefSeq" id="WP_011054346.1">
    <property type="nucleotide sequence ID" value="NC_004070.1"/>
</dbReference>
<dbReference type="SMR" id="P0DD00"/>
<dbReference type="MEROPS" id="M20.003"/>
<dbReference type="KEGG" id="spg:SpyM3_0533"/>
<dbReference type="HOGENOM" id="CLU_053676_0_0_9"/>
<dbReference type="Proteomes" id="UP000000564">
    <property type="component" value="Chromosome"/>
</dbReference>
<dbReference type="GO" id="GO:0005829">
    <property type="term" value="C:cytosol"/>
    <property type="evidence" value="ECO:0007669"/>
    <property type="project" value="TreeGrafter"/>
</dbReference>
<dbReference type="GO" id="GO:0008237">
    <property type="term" value="F:metallopeptidase activity"/>
    <property type="evidence" value="ECO:0007669"/>
    <property type="project" value="UniProtKB-KW"/>
</dbReference>
<dbReference type="GO" id="GO:0045148">
    <property type="term" value="F:tripeptide aminopeptidase activity"/>
    <property type="evidence" value="ECO:0007669"/>
    <property type="project" value="UniProtKB-UniRule"/>
</dbReference>
<dbReference type="GO" id="GO:0008270">
    <property type="term" value="F:zinc ion binding"/>
    <property type="evidence" value="ECO:0007669"/>
    <property type="project" value="UniProtKB-UniRule"/>
</dbReference>
<dbReference type="GO" id="GO:0043171">
    <property type="term" value="P:peptide catabolic process"/>
    <property type="evidence" value="ECO:0007669"/>
    <property type="project" value="UniProtKB-UniRule"/>
</dbReference>
<dbReference type="GO" id="GO:0006508">
    <property type="term" value="P:proteolysis"/>
    <property type="evidence" value="ECO:0007669"/>
    <property type="project" value="UniProtKB-UniRule"/>
</dbReference>
<dbReference type="CDD" id="cd03892">
    <property type="entry name" value="M20_peptT"/>
    <property type="match status" value="1"/>
</dbReference>
<dbReference type="FunFam" id="3.30.70.360:FF:000002">
    <property type="entry name" value="Peptidase T"/>
    <property type="match status" value="1"/>
</dbReference>
<dbReference type="Gene3D" id="3.30.70.360">
    <property type="match status" value="1"/>
</dbReference>
<dbReference type="Gene3D" id="3.40.630.10">
    <property type="entry name" value="Zn peptidases"/>
    <property type="match status" value="1"/>
</dbReference>
<dbReference type="HAMAP" id="MF_00550">
    <property type="entry name" value="Aminopeptidase_M20"/>
    <property type="match status" value="1"/>
</dbReference>
<dbReference type="InterPro" id="IPR001261">
    <property type="entry name" value="ArgE/DapE_CS"/>
</dbReference>
<dbReference type="InterPro" id="IPR036264">
    <property type="entry name" value="Bact_exopeptidase_dim_dom"/>
</dbReference>
<dbReference type="InterPro" id="IPR002933">
    <property type="entry name" value="Peptidase_M20"/>
</dbReference>
<dbReference type="InterPro" id="IPR011650">
    <property type="entry name" value="Peptidase_M20_dimer"/>
</dbReference>
<dbReference type="InterPro" id="IPR010161">
    <property type="entry name" value="Peptidase_M20B"/>
</dbReference>
<dbReference type="NCBIfam" id="TIGR01882">
    <property type="entry name" value="peptidase-T"/>
    <property type="match status" value="1"/>
</dbReference>
<dbReference type="NCBIfam" id="NF003976">
    <property type="entry name" value="PRK05469.1"/>
    <property type="match status" value="1"/>
</dbReference>
<dbReference type="NCBIfam" id="NF009920">
    <property type="entry name" value="PRK13381.1"/>
    <property type="match status" value="1"/>
</dbReference>
<dbReference type="PANTHER" id="PTHR42994">
    <property type="entry name" value="PEPTIDASE T"/>
    <property type="match status" value="1"/>
</dbReference>
<dbReference type="PANTHER" id="PTHR42994:SF1">
    <property type="entry name" value="PEPTIDASE T"/>
    <property type="match status" value="1"/>
</dbReference>
<dbReference type="Pfam" id="PF07687">
    <property type="entry name" value="M20_dimer"/>
    <property type="match status" value="1"/>
</dbReference>
<dbReference type="Pfam" id="PF01546">
    <property type="entry name" value="Peptidase_M20"/>
    <property type="match status" value="1"/>
</dbReference>
<dbReference type="PIRSF" id="PIRSF037215">
    <property type="entry name" value="Peptidase_M20B"/>
    <property type="match status" value="1"/>
</dbReference>
<dbReference type="SUPFAM" id="SSF55031">
    <property type="entry name" value="Bacterial exopeptidase dimerisation domain"/>
    <property type="match status" value="1"/>
</dbReference>
<dbReference type="SUPFAM" id="SSF53187">
    <property type="entry name" value="Zn-dependent exopeptidases"/>
    <property type="match status" value="1"/>
</dbReference>
<dbReference type="PROSITE" id="PS00758">
    <property type="entry name" value="ARGE_DAPE_CPG2_1"/>
    <property type="match status" value="1"/>
</dbReference>
<dbReference type="PROSITE" id="PS00759">
    <property type="entry name" value="ARGE_DAPE_CPG2_2"/>
    <property type="match status" value="1"/>
</dbReference>
<feature type="chain" id="PRO_0000185325" description="Peptidase T">
    <location>
        <begin position="1"/>
        <end position="407"/>
    </location>
</feature>
<feature type="active site" evidence="1">
    <location>
        <position position="84"/>
    </location>
</feature>
<feature type="active site" description="Proton acceptor" evidence="1">
    <location>
        <position position="177"/>
    </location>
</feature>
<feature type="binding site" evidence="1">
    <location>
        <position position="82"/>
    </location>
    <ligand>
        <name>Zn(2+)</name>
        <dbReference type="ChEBI" id="CHEBI:29105"/>
        <label>1</label>
    </ligand>
</feature>
<feature type="binding site" evidence="1">
    <location>
        <position position="143"/>
    </location>
    <ligand>
        <name>Zn(2+)</name>
        <dbReference type="ChEBI" id="CHEBI:29105"/>
        <label>1</label>
    </ligand>
</feature>
<feature type="binding site" evidence="1">
    <location>
        <position position="143"/>
    </location>
    <ligand>
        <name>Zn(2+)</name>
        <dbReference type="ChEBI" id="CHEBI:29105"/>
        <label>2</label>
    </ligand>
</feature>
<feature type="binding site" evidence="1">
    <location>
        <position position="178"/>
    </location>
    <ligand>
        <name>Zn(2+)</name>
        <dbReference type="ChEBI" id="CHEBI:29105"/>
        <label>2</label>
    </ligand>
</feature>
<feature type="binding site" evidence="1">
    <location>
        <position position="200"/>
    </location>
    <ligand>
        <name>Zn(2+)</name>
        <dbReference type="ChEBI" id="CHEBI:29105"/>
        <label>1</label>
    </ligand>
</feature>
<feature type="binding site" evidence="1">
    <location>
        <position position="382"/>
    </location>
    <ligand>
        <name>Zn(2+)</name>
        <dbReference type="ChEBI" id="CHEBI:29105"/>
        <label>2</label>
    </ligand>
</feature>
<organism>
    <name type="scientific">Streptococcus pyogenes serotype M3 (strain ATCC BAA-595 / MGAS315)</name>
    <dbReference type="NCBI Taxonomy" id="198466"/>
    <lineage>
        <taxon>Bacteria</taxon>
        <taxon>Bacillati</taxon>
        <taxon>Bacillota</taxon>
        <taxon>Bacilli</taxon>
        <taxon>Lactobacillales</taxon>
        <taxon>Streptococcaceae</taxon>
        <taxon>Streptococcus</taxon>
    </lineage>
</organism>
<sequence>MKYDNLLDRFIKYVKVNTRSDPDSETTPSTESQEAFALTILKPEMEAIGLQDVHYNPVNGYLIGTLPANNPTLTRKIGFIAHMDTADFNAENVNPQIIDNYQGGDITLGSSNYKLDPKAFPNLNNYIGQTLITTDGTTLLGADDKSGIAEIMTAIEFLTSQPQIEHCDIKVAFGPDEEIGVGADKFEVADFEVDFAYTMDGGPLGELQYETFSAAALEVTFLGRNVHPGTAKDQMINALELAIDFHEKLPAKERPEYTDGYQGFYHLTGLTGTVEEARASYIIRDFEEASFEARKVKVENIAQSMNAHLGTKRVLVELNDQYYNMKKVIEKDMTAIELAKEVMEELAIKPVIEPIRGGTDGSKISFMGIPTPNIFAGGENMHGRFEFVSLQTMERAIDVIIGLVCKA</sequence>
<evidence type="ECO:0000255" key="1">
    <source>
        <dbReference type="HAMAP-Rule" id="MF_00550"/>
    </source>
</evidence>
<comment type="function">
    <text evidence="1">Cleaves the N-terminal amino acid of tripeptides.</text>
</comment>
<comment type="catalytic activity">
    <reaction evidence="1">
        <text>Release of the N-terminal residue from a tripeptide.</text>
        <dbReference type="EC" id="3.4.11.4"/>
    </reaction>
</comment>
<comment type="cofactor">
    <cofactor evidence="1">
        <name>Zn(2+)</name>
        <dbReference type="ChEBI" id="CHEBI:29105"/>
    </cofactor>
    <text evidence="1">Binds 2 Zn(2+) ions per subunit.</text>
</comment>
<comment type="subcellular location">
    <subcellularLocation>
        <location evidence="1">Cytoplasm</location>
    </subcellularLocation>
</comment>
<comment type="similarity">
    <text evidence="1">Belongs to the peptidase M20B family.</text>
</comment>
<accession>P0DD00</accession>
<accession>Q8K802</accession>
<reference key="1">
    <citation type="journal article" date="2002" name="Proc. Natl. Acad. Sci. U.S.A.">
        <title>Genome sequence of a serotype M3 strain of group A Streptococcus: phage-encoded toxins, the high-virulence phenotype, and clone emergence.</title>
        <authorList>
            <person name="Beres S.B."/>
            <person name="Sylva G.L."/>
            <person name="Barbian K.D."/>
            <person name="Lei B."/>
            <person name="Hoff J.S."/>
            <person name="Mammarella N.D."/>
            <person name="Liu M.-Y."/>
            <person name="Smoot J.C."/>
            <person name="Porcella S.F."/>
            <person name="Parkins L.D."/>
            <person name="Campbell D.S."/>
            <person name="Smith T.M."/>
            <person name="McCormick J.K."/>
            <person name="Leung D.Y.M."/>
            <person name="Schlievert P.M."/>
            <person name="Musser J.M."/>
        </authorList>
    </citation>
    <scope>NUCLEOTIDE SEQUENCE [LARGE SCALE GENOMIC DNA]</scope>
    <source>
        <strain>ATCC BAA-595 / MGAS315</strain>
    </source>
</reference>
<proteinExistence type="inferred from homology"/>